<feature type="chain" id="PRO_0000107755" description="RNase adapter protein RapZ">
    <location>
        <begin position="1"/>
        <end position="284"/>
    </location>
</feature>
<feature type="region of interest" description="RNA-binding" evidence="1">
    <location>
        <begin position="266"/>
        <end position="284"/>
    </location>
</feature>
<feature type="binding site" evidence="1">
    <location>
        <begin position="8"/>
        <end position="15"/>
    </location>
    <ligand>
        <name>ATP</name>
        <dbReference type="ChEBI" id="CHEBI:30616"/>
    </ligand>
</feature>
<feature type="binding site" evidence="1">
    <location>
        <begin position="56"/>
        <end position="59"/>
    </location>
    <ligand>
        <name>GTP</name>
        <dbReference type="ChEBI" id="CHEBI:37565"/>
    </ligand>
</feature>
<comment type="function">
    <text evidence="1">Modulates the synthesis of GlmS, by affecting the processing and stability of the regulatory small RNA GlmZ. When glucosamine-6-phosphate (GlcN6P) concentrations are high in the cell, RapZ binds GlmZ and targets it to cleavage by RNase E. Consequently, GlmZ is inactivated and unable to activate GlmS synthesis. Under low GlcN6P concentrations, RapZ is sequestered and inactivated by an other regulatory small RNA, GlmY, preventing GlmZ degradation and leading to synthesis of GlmS.</text>
</comment>
<comment type="subunit">
    <text evidence="1">Homotrimer.</text>
</comment>
<comment type="similarity">
    <text evidence="1">Belongs to the RapZ-like family. RapZ subfamily.</text>
</comment>
<name>RAPZ_SHIFL</name>
<protein>
    <recommendedName>
        <fullName evidence="1">RNase adapter protein RapZ</fullName>
    </recommendedName>
</protein>
<sequence>MVLMIVSGRSGSGKSVALRALEDMGFYCVDNLPVVLLPDLARTLADREISAAVSIDVRNMPESPEIFEQAMSNLPDAFSPQLLFLDADRNTLIRRYSDTRRLHPLSSKNLSLESAIDKESDLLEPLRSRADLIVDTSEMSVHELAEMLRTRLLGKRERELTMVFESFGFKHGIPIDADYVFDVRFLPNPHWDPKLRPMTGLDKPVAAFLDRHTEVHNFIYQTRSYLELWLPMLETNNRSYLTVAIGCTGGKHRSVYIAEQLADYFRSRGKNVQSRHRTLEKRKP</sequence>
<keyword id="KW-0067">ATP-binding</keyword>
<keyword id="KW-0342">GTP-binding</keyword>
<keyword id="KW-0547">Nucleotide-binding</keyword>
<keyword id="KW-1185">Reference proteome</keyword>
<keyword id="KW-0694">RNA-binding</keyword>
<dbReference type="EMBL" id="AE005674">
    <property type="protein sequence ID" value="AAN44711.1"/>
    <property type="molecule type" value="Genomic_DNA"/>
</dbReference>
<dbReference type="EMBL" id="AE014073">
    <property type="protein sequence ID" value="AAP18525.1"/>
    <property type="molecule type" value="Genomic_DNA"/>
</dbReference>
<dbReference type="RefSeq" id="WP_000243741.1">
    <property type="nucleotide sequence ID" value="NZ_WPGW01000004.1"/>
</dbReference>
<dbReference type="SMR" id="P0A897"/>
<dbReference type="STRING" id="198214.SF3245"/>
<dbReference type="PaxDb" id="198214-SF3245"/>
<dbReference type="GeneID" id="93778776"/>
<dbReference type="KEGG" id="sfl:SF3245"/>
<dbReference type="KEGG" id="sfx:S3463"/>
<dbReference type="PATRIC" id="fig|198214.7.peg.3846"/>
<dbReference type="HOGENOM" id="CLU_059558_1_1_6"/>
<dbReference type="Proteomes" id="UP000001006">
    <property type="component" value="Chromosome"/>
</dbReference>
<dbReference type="Proteomes" id="UP000002673">
    <property type="component" value="Chromosome"/>
</dbReference>
<dbReference type="GO" id="GO:0005524">
    <property type="term" value="F:ATP binding"/>
    <property type="evidence" value="ECO:0007669"/>
    <property type="project" value="UniProtKB-UniRule"/>
</dbReference>
<dbReference type="GO" id="GO:0005525">
    <property type="term" value="F:GTP binding"/>
    <property type="evidence" value="ECO:0007669"/>
    <property type="project" value="UniProtKB-UniRule"/>
</dbReference>
<dbReference type="GO" id="GO:0003723">
    <property type="term" value="F:RNA binding"/>
    <property type="evidence" value="ECO:0007669"/>
    <property type="project" value="UniProtKB-KW"/>
</dbReference>
<dbReference type="Gene3D" id="3.40.50.300">
    <property type="entry name" value="P-loop containing nucleotide triphosphate hydrolases"/>
    <property type="match status" value="1"/>
</dbReference>
<dbReference type="HAMAP" id="MF_00636">
    <property type="entry name" value="RapZ_like"/>
    <property type="match status" value="1"/>
</dbReference>
<dbReference type="InterPro" id="IPR027417">
    <property type="entry name" value="P-loop_NTPase"/>
</dbReference>
<dbReference type="InterPro" id="IPR005337">
    <property type="entry name" value="RapZ-like"/>
</dbReference>
<dbReference type="InterPro" id="IPR053930">
    <property type="entry name" value="RapZ-like_N"/>
</dbReference>
<dbReference type="InterPro" id="IPR053931">
    <property type="entry name" value="RapZ_C"/>
</dbReference>
<dbReference type="NCBIfam" id="NF003828">
    <property type="entry name" value="PRK05416.1"/>
    <property type="match status" value="1"/>
</dbReference>
<dbReference type="PANTHER" id="PTHR30448">
    <property type="entry name" value="RNASE ADAPTER PROTEIN RAPZ"/>
    <property type="match status" value="1"/>
</dbReference>
<dbReference type="PANTHER" id="PTHR30448:SF0">
    <property type="entry name" value="RNASE ADAPTER PROTEIN RAPZ"/>
    <property type="match status" value="1"/>
</dbReference>
<dbReference type="Pfam" id="PF22740">
    <property type="entry name" value="PapZ_C"/>
    <property type="match status" value="1"/>
</dbReference>
<dbReference type="Pfam" id="PF03668">
    <property type="entry name" value="RapZ-like_N"/>
    <property type="match status" value="1"/>
</dbReference>
<dbReference type="PIRSF" id="PIRSF005052">
    <property type="entry name" value="P-loopkin"/>
    <property type="match status" value="1"/>
</dbReference>
<dbReference type="SUPFAM" id="SSF52540">
    <property type="entry name" value="P-loop containing nucleoside triphosphate hydrolases"/>
    <property type="match status" value="1"/>
</dbReference>
<organism>
    <name type="scientific">Shigella flexneri</name>
    <dbReference type="NCBI Taxonomy" id="623"/>
    <lineage>
        <taxon>Bacteria</taxon>
        <taxon>Pseudomonadati</taxon>
        <taxon>Pseudomonadota</taxon>
        <taxon>Gammaproteobacteria</taxon>
        <taxon>Enterobacterales</taxon>
        <taxon>Enterobacteriaceae</taxon>
        <taxon>Shigella</taxon>
    </lineage>
</organism>
<reference key="1">
    <citation type="journal article" date="2002" name="Nucleic Acids Res.">
        <title>Genome sequence of Shigella flexneri 2a: insights into pathogenicity through comparison with genomes of Escherichia coli K12 and O157.</title>
        <authorList>
            <person name="Jin Q."/>
            <person name="Yuan Z."/>
            <person name="Xu J."/>
            <person name="Wang Y."/>
            <person name="Shen Y."/>
            <person name="Lu W."/>
            <person name="Wang J."/>
            <person name="Liu H."/>
            <person name="Yang J."/>
            <person name="Yang F."/>
            <person name="Zhang X."/>
            <person name="Zhang J."/>
            <person name="Yang G."/>
            <person name="Wu H."/>
            <person name="Qu D."/>
            <person name="Dong J."/>
            <person name="Sun L."/>
            <person name="Xue Y."/>
            <person name="Zhao A."/>
            <person name="Gao Y."/>
            <person name="Zhu J."/>
            <person name="Kan B."/>
            <person name="Ding K."/>
            <person name="Chen S."/>
            <person name="Cheng H."/>
            <person name="Yao Z."/>
            <person name="He B."/>
            <person name="Chen R."/>
            <person name="Ma D."/>
            <person name="Qiang B."/>
            <person name="Wen Y."/>
            <person name="Hou Y."/>
            <person name="Yu J."/>
        </authorList>
    </citation>
    <scope>NUCLEOTIDE SEQUENCE [LARGE SCALE GENOMIC DNA]</scope>
    <source>
        <strain>301 / Serotype 2a</strain>
    </source>
</reference>
<reference key="2">
    <citation type="journal article" date="2003" name="Infect. Immun.">
        <title>Complete genome sequence and comparative genomics of Shigella flexneri serotype 2a strain 2457T.</title>
        <authorList>
            <person name="Wei J."/>
            <person name="Goldberg M.B."/>
            <person name="Burland V."/>
            <person name="Venkatesan M.M."/>
            <person name="Deng W."/>
            <person name="Fournier G."/>
            <person name="Mayhew G.F."/>
            <person name="Plunkett G. III"/>
            <person name="Rose D.J."/>
            <person name="Darling A."/>
            <person name="Mau B."/>
            <person name="Perna N.T."/>
            <person name="Payne S.M."/>
            <person name="Runyen-Janecky L.J."/>
            <person name="Zhou S."/>
            <person name="Schwartz D.C."/>
            <person name="Blattner F.R."/>
        </authorList>
    </citation>
    <scope>NUCLEOTIDE SEQUENCE [LARGE SCALE GENOMIC DNA]</scope>
    <source>
        <strain>ATCC 700930 / 2457T / Serotype 2a</strain>
    </source>
</reference>
<proteinExistence type="inferred from homology"/>
<evidence type="ECO:0000255" key="1">
    <source>
        <dbReference type="HAMAP-Rule" id="MF_00636"/>
    </source>
</evidence>
<gene>
    <name evidence="1" type="primary">rapZ</name>
    <name type="ordered locus">SF3245</name>
    <name type="ordered locus">S3463</name>
</gene>
<accession>P0A897</accession>
<accession>P33995</accession>